<keyword id="KW-0067">ATP-binding</keyword>
<keyword id="KW-1003">Cell membrane</keyword>
<keyword id="KW-0868">Chloride</keyword>
<keyword id="KW-0869">Chloride channel</keyword>
<keyword id="KW-0256">Endoplasmic reticulum</keyword>
<keyword id="KW-0967">Endosome</keyword>
<keyword id="KW-0325">Glycoprotein</keyword>
<keyword id="KW-0407">Ion channel</keyword>
<keyword id="KW-0406">Ion transport</keyword>
<keyword id="KW-0413">Isomerase</keyword>
<keyword id="KW-1017">Isopeptide bond</keyword>
<keyword id="KW-0449">Lipoprotein</keyword>
<keyword id="KW-0472">Membrane</keyword>
<keyword id="KW-0547">Nucleotide-binding</keyword>
<keyword id="KW-0539">Nucleus</keyword>
<keyword id="KW-0564">Palmitate</keyword>
<keyword id="KW-0597">Phosphoprotein</keyword>
<keyword id="KW-1185">Reference proteome</keyword>
<keyword id="KW-0677">Repeat</keyword>
<keyword id="KW-0812">Transmembrane</keyword>
<keyword id="KW-1133">Transmembrane helix</keyword>
<keyword id="KW-0813">Transport</keyword>
<keyword id="KW-0832">Ubl conjugation</keyword>
<dbReference type="EC" id="5.6.1.6" evidence="1"/>
<dbReference type="EMBL" id="DP000026">
    <property type="protein sequence ID" value="ABC87466.1"/>
    <property type="molecule type" value="Genomic_DNA"/>
</dbReference>
<dbReference type="RefSeq" id="NP_001162017.1">
    <property type="nucleotide sequence ID" value="NM_001168545.1"/>
</dbReference>
<dbReference type="SMR" id="Q2IBE4"/>
<dbReference type="FunCoup" id="Q2IBE4">
    <property type="interactions" value="524"/>
</dbReference>
<dbReference type="STRING" id="9601.ENSPPYP00000020117"/>
<dbReference type="GlyCosmos" id="Q2IBE4">
    <property type="glycosylation" value="2 sites, No reported glycans"/>
</dbReference>
<dbReference type="GeneID" id="100137035"/>
<dbReference type="KEGG" id="pon:100137035"/>
<dbReference type="CTD" id="1080"/>
<dbReference type="eggNOG" id="KOG0054">
    <property type="taxonomic scope" value="Eukaryota"/>
</dbReference>
<dbReference type="HOGENOM" id="CLU_000604_27_1_1"/>
<dbReference type="InParanoid" id="Q2IBE4"/>
<dbReference type="OrthoDB" id="6500128at2759"/>
<dbReference type="TreeFam" id="TF105200"/>
<dbReference type="Proteomes" id="UP000001595">
    <property type="component" value="Chromosome 7"/>
</dbReference>
<dbReference type="GO" id="GO:0016324">
    <property type="term" value="C:apical plasma membrane"/>
    <property type="evidence" value="ECO:0000250"/>
    <property type="project" value="UniProtKB"/>
</dbReference>
<dbReference type="GO" id="GO:0034707">
    <property type="term" value="C:chloride channel complex"/>
    <property type="evidence" value="ECO:0007669"/>
    <property type="project" value="UniProtKB-KW"/>
</dbReference>
<dbReference type="GO" id="GO:0005829">
    <property type="term" value="C:cytosol"/>
    <property type="evidence" value="ECO:0007669"/>
    <property type="project" value="TreeGrafter"/>
</dbReference>
<dbReference type="GO" id="GO:0005769">
    <property type="term" value="C:early endosome"/>
    <property type="evidence" value="ECO:0000250"/>
    <property type="project" value="UniProtKB"/>
</dbReference>
<dbReference type="GO" id="GO:0031901">
    <property type="term" value="C:early endosome membrane"/>
    <property type="evidence" value="ECO:0007669"/>
    <property type="project" value="UniProtKB-SubCell"/>
</dbReference>
<dbReference type="GO" id="GO:0005789">
    <property type="term" value="C:endoplasmic reticulum membrane"/>
    <property type="evidence" value="ECO:0000250"/>
    <property type="project" value="UniProtKB"/>
</dbReference>
<dbReference type="GO" id="GO:0016020">
    <property type="term" value="C:membrane"/>
    <property type="evidence" value="ECO:0000250"/>
    <property type="project" value="UniProtKB"/>
</dbReference>
<dbReference type="GO" id="GO:0005634">
    <property type="term" value="C:nucleus"/>
    <property type="evidence" value="ECO:0000250"/>
    <property type="project" value="UniProtKB"/>
</dbReference>
<dbReference type="GO" id="GO:0005886">
    <property type="term" value="C:plasma membrane"/>
    <property type="evidence" value="ECO:0000250"/>
    <property type="project" value="UniProtKB"/>
</dbReference>
<dbReference type="GO" id="GO:0055038">
    <property type="term" value="C:recycling endosome membrane"/>
    <property type="evidence" value="ECO:0007669"/>
    <property type="project" value="UniProtKB-SubCell"/>
</dbReference>
<dbReference type="GO" id="GO:0140359">
    <property type="term" value="F:ABC-type transporter activity"/>
    <property type="evidence" value="ECO:0007669"/>
    <property type="project" value="InterPro"/>
</dbReference>
<dbReference type="GO" id="GO:0005524">
    <property type="term" value="F:ATP binding"/>
    <property type="evidence" value="ECO:0007669"/>
    <property type="project" value="UniProtKB-KW"/>
</dbReference>
<dbReference type="GO" id="GO:0016887">
    <property type="term" value="F:ATP hydrolysis activity"/>
    <property type="evidence" value="ECO:0000250"/>
    <property type="project" value="UniProtKB"/>
</dbReference>
<dbReference type="GO" id="GO:0015106">
    <property type="term" value="F:bicarbonate transmembrane transporter activity"/>
    <property type="evidence" value="ECO:0000250"/>
    <property type="project" value="UniProtKB"/>
</dbReference>
<dbReference type="GO" id="GO:0005254">
    <property type="term" value="F:chloride channel activity"/>
    <property type="evidence" value="ECO:0000250"/>
    <property type="project" value="UniProtKB"/>
</dbReference>
<dbReference type="GO" id="GO:0019869">
    <property type="term" value="F:chloride channel inhibitor activity"/>
    <property type="evidence" value="ECO:0000250"/>
    <property type="project" value="UniProtKB"/>
</dbReference>
<dbReference type="GO" id="GO:0015108">
    <property type="term" value="F:chloride transmembrane transporter activity"/>
    <property type="evidence" value="ECO:0000250"/>
    <property type="project" value="UniProtKB"/>
</dbReference>
<dbReference type="GO" id="GO:0005260">
    <property type="term" value="F:intracellularly ATP-gated chloride channel activity"/>
    <property type="evidence" value="ECO:0000250"/>
    <property type="project" value="UniProtKB"/>
</dbReference>
<dbReference type="GO" id="GO:0015701">
    <property type="term" value="P:bicarbonate transport"/>
    <property type="evidence" value="ECO:0000250"/>
    <property type="project" value="UniProtKB"/>
</dbReference>
<dbReference type="GO" id="GO:0071320">
    <property type="term" value="P:cellular response to cAMP"/>
    <property type="evidence" value="ECO:0000250"/>
    <property type="project" value="UniProtKB"/>
</dbReference>
<dbReference type="GO" id="GO:1904322">
    <property type="term" value="P:cellular response to forskolin"/>
    <property type="evidence" value="ECO:0000250"/>
    <property type="project" value="UniProtKB"/>
</dbReference>
<dbReference type="GO" id="GO:1902476">
    <property type="term" value="P:chloride transmembrane transport"/>
    <property type="evidence" value="ECO:0000250"/>
    <property type="project" value="UniProtKB"/>
</dbReference>
<dbReference type="GO" id="GO:0051454">
    <property type="term" value="P:intracellular pH elevation"/>
    <property type="evidence" value="ECO:0000250"/>
    <property type="project" value="UniProtKB"/>
</dbReference>
<dbReference type="GO" id="GO:0060081">
    <property type="term" value="P:membrane hyperpolarization"/>
    <property type="evidence" value="ECO:0000250"/>
    <property type="project" value="UniProtKB"/>
</dbReference>
<dbReference type="GO" id="GO:0050891">
    <property type="term" value="P:multicellular organismal-level water homeostasis"/>
    <property type="evidence" value="ECO:0000250"/>
    <property type="project" value="UniProtKB"/>
</dbReference>
<dbReference type="GO" id="GO:0034976">
    <property type="term" value="P:response to endoplasmic reticulum stress"/>
    <property type="evidence" value="ECO:0000250"/>
    <property type="project" value="UniProtKB"/>
</dbReference>
<dbReference type="GO" id="GO:0048240">
    <property type="term" value="P:sperm capacitation"/>
    <property type="evidence" value="ECO:0000250"/>
    <property type="project" value="UniProtKB"/>
</dbReference>
<dbReference type="GO" id="GO:0035377">
    <property type="term" value="P:transepithelial water transport"/>
    <property type="evidence" value="ECO:0000250"/>
    <property type="project" value="UniProtKB"/>
</dbReference>
<dbReference type="CDD" id="cd18594">
    <property type="entry name" value="ABC_6TM_CFTR_D1"/>
    <property type="match status" value="1"/>
</dbReference>
<dbReference type="CDD" id="cd18600">
    <property type="entry name" value="ABC_6TM_CFTR_D2"/>
    <property type="match status" value="1"/>
</dbReference>
<dbReference type="CDD" id="cd03291">
    <property type="entry name" value="ABCC_CFTR1"/>
    <property type="match status" value="1"/>
</dbReference>
<dbReference type="CDD" id="cd03289">
    <property type="entry name" value="ABCC_CFTR2"/>
    <property type="match status" value="1"/>
</dbReference>
<dbReference type="FunFam" id="1.20.1560.10:FF:000017">
    <property type="entry name" value="Cystic fibrosis transmembrane conductance regulator"/>
    <property type="match status" value="1"/>
</dbReference>
<dbReference type="FunFam" id="1.20.1560.10:FF:000019">
    <property type="entry name" value="Cystic fibrosis transmembrane conductance regulator"/>
    <property type="match status" value="1"/>
</dbReference>
<dbReference type="FunFam" id="3.40.50.300:FF:000581">
    <property type="entry name" value="Cystic fibrosis transmembrane conductance regulator"/>
    <property type="match status" value="1"/>
</dbReference>
<dbReference type="FunFam" id="3.40.50.300:FF:000591">
    <property type="entry name" value="Cystic fibrosis transmembrane conductance regulator"/>
    <property type="match status" value="1"/>
</dbReference>
<dbReference type="Gene3D" id="1.20.1560.10">
    <property type="entry name" value="ABC transporter type 1, transmembrane domain"/>
    <property type="match status" value="2"/>
</dbReference>
<dbReference type="Gene3D" id="3.40.50.300">
    <property type="entry name" value="P-loop containing nucleotide triphosphate hydrolases"/>
    <property type="match status" value="2"/>
</dbReference>
<dbReference type="InterPro" id="IPR003593">
    <property type="entry name" value="AAA+_ATPase"/>
</dbReference>
<dbReference type="InterPro" id="IPR011527">
    <property type="entry name" value="ABC1_TM_dom"/>
</dbReference>
<dbReference type="InterPro" id="IPR036640">
    <property type="entry name" value="ABC1_TM_sf"/>
</dbReference>
<dbReference type="InterPro" id="IPR003439">
    <property type="entry name" value="ABC_transporter-like_ATP-bd"/>
</dbReference>
<dbReference type="InterPro" id="IPR017871">
    <property type="entry name" value="ABC_transporter-like_CS"/>
</dbReference>
<dbReference type="InterPro" id="IPR050173">
    <property type="entry name" value="ABC_transporter_C-like"/>
</dbReference>
<dbReference type="InterPro" id="IPR009147">
    <property type="entry name" value="CFTR/ABCC7"/>
</dbReference>
<dbReference type="InterPro" id="IPR047082">
    <property type="entry name" value="CFTR1_ATP-bd_dom1"/>
</dbReference>
<dbReference type="InterPro" id="IPR025837">
    <property type="entry name" value="CFTR_reg_dom"/>
</dbReference>
<dbReference type="InterPro" id="IPR027417">
    <property type="entry name" value="P-loop_NTPase"/>
</dbReference>
<dbReference type="NCBIfam" id="TIGR01271">
    <property type="entry name" value="CFTR_protein"/>
    <property type="match status" value="1"/>
</dbReference>
<dbReference type="PANTHER" id="PTHR24223">
    <property type="entry name" value="ATP-BINDING CASSETTE SUB-FAMILY C"/>
    <property type="match status" value="1"/>
</dbReference>
<dbReference type="PANTHER" id="PTHR24223:SF19">
    <property type="entry name" value="CYSTIC FIBROSIS TRANSMEMBRANE CONDUCTANCE REGULATOR"/>
    <property type="match status" value="1"/>
</dbReference>
<dbReference type="Pfam" id="PF00664">
    <property type="entry name" value="ABC_membrane"/>
    <property type="match status" value="2"/>
</dbReference>
<dbReference type="Pfam" id="PF00005">
    <property type="entry name" value="ABC_tran"/>
    <property type="match status" value="2"/>
</dbReference>
<dbReference type="Pfam" id="PF14396">
    <property type="entry name" value="CFTR_R"/>
    <property type="match status" value="1"/>
</dbReference>
<dbReference type="PRINTS" id="PR01851">
    <property type="entry name" value="CYSFIBREGLTR"/>
</dbReference>
<dbReference type="SMART" id="SM00382">
    <property type="entry name" value="AAA"/>
    <property type="match status" value="2"/>
</dbReference>
<dbReference type="SUPFAM" id="SSF90123">
    <property type="entry name" value="ABC transporter transmembrane region"/>
    <property type="match status" value="2"/>
</dbReference>
<dbReference type="SUPFAM" id="SSF52540">
    <property type="entry name" value="P-loop containing nucleoside triphosphate hydrolases"/>
    <property type="match status" value="2"/>
</dbReference>
<dbReference type="PROSITE" id="PS50929">
    <property type="entry name" value="ABC_TM1F"/>
    <property type="match status" value="2"/>
</dbReference>
<dbReference type="PROSITE" id="PS00211">
    <property type="entry name" value="ABC_TRANSPORTER_1"/>
    <property type="match status" value="1"/>
</dbReference>
<dbReference type="PROSITE" id="PS50893">
    <property type="entry name" value="ABC_TRANSPORTER_2"/>
    <property type="match status" value="2"/>
</dbReference>
<proteinExistence type="inferred from homology"/>
<name>CFTR_PONAB</name>
<reference key="1">
    <citation type="submission" date="2006-01" db="EMBL/GenBank/DDBJ databases">
        <title>NISC comparative sequencing initiative.</title>
        <authorList>
            <person name="Antonellis A."/>
            <person name="Ayele K."/>
            <person name="Benjamin B."/>
            <person name="Blakesley R.W."/>
            <person name="Boakye A."/>
            <person name="Bouffard G.G."/>
            <person name="Brinkley C."/>
            <person name="Brooks S."/>
            <person name="Chu G."/>
            <person name="Coleman H."/>
            <person name="Engle J."/>
            <person name="Gestole M."/>
            <person name="Greene A."/>
            <person name="Guan X."/>
            <person name="Gupta J."/>
            <person name="Haghighi P."/>
            <person name="Han J."/>
            <person name="Hansen N."/>
            <person name="Ho S.-L."/>
            <person name="Hu P."/>
            <person name="Hunter G."/>
            <person name="Hurle B."/>
            <person name="Idol J.R."/>
            <person name="Kwong P."/>
            <person name="Laric P."/>
            <person name="Larson S."/>
            <person name="Lee-Lin S.-Q."/>
            <person name="Legaspi R."/>
            <person name="Madden M."/>
            <person name="Maduro Q.L."/>
            <person name="Maduro V.B."/>
            <person name="Margulies E.H."/>
            <person name="Masiello C."/>
            <person name="Maskeri B."/>
            <person name="McDowell J."/>
            <person name="Mojidi H.A."/>
            <person name="Mullikin J.C."/>
            <person name="Oestreicher J.S."/>
            <person name="Park M."/>
            <person name="Portnoy M.E."/>
            <person name="Prasad A."/>
            <person name="Puri O."/>
            <person name="Reddix-Dugue N."/>
            <person name="Schandler K."/>
            <person name="Schueler M.G."/>
            <person name="Sison C."/>
            <person name="Stantripop S."/>
            <person name="Stephen E."/>
            <person name="Taye A."/>
            <person name="Thomas J.W."/>
            <person name="Thomas P.J."/>
            <person name="Tsipouri V."/>
            <person name="Ung L."/>
            <person name="Vogt J.L."/>
            <person name="Wetherby K.D."/>
            <person name="Young A."/>
            <person name="Green E.D."/>
        </authorList>
    </citation>
    <scope>NUCLEOTIDE SEQUENCE [LARGE SCALE GENOMIC DNA]</scope>
</reference>
<comment type="function">
    <text evidence="1 2">Epithelial ion channel that plays an important role in the regulation of epithelial ion and water transport and fluid homeostasis. Mediates the transport of chloride ions across the cell membrane (By similarity). Possesses an intrinsic ATPase activity and utilizes ATP to gate its channel; the passive flow of anions through the channel is gated by cycles of ATP binding and hydrolysis by the ATP-binding domains (By similarity). The ion channel is also permeable to HCO(3)(-); selectivity depends on the extracellular chloride concentration. Exerts its function also by modulating the activity of other ion channels and transporters. Contributes to the regulation of the pH and the ion content of the epithelial fluid layer. Modulates the activity of the epithelial sodium channel (ENaC) complex, in part by regulating the cell surface expression of the ENaC complex. May regulate bicarbonate secretion and salvage in epithelial cells by regulating the transporter SLC4A7. Can inhibit the chloride channel activity of ANO1 (By similarity). Plays a role in the chloride and bicarbonate homeostasis during sperm epididymal maturation and capacitation (By similarity).</text>
</comment>
<comment type="catalytic activity">
    <reaction evidence="1">
        <text>ATP + H2O + closed Cl(-) channel = ADP + phosphate + open Cl(-) channel.</text>
        <dbReference type="EC" id="5.6.1.6"/>
    </reaction>
</comment>
<comment type="catalytic activity">
    <reaction evidence="1">
        <text>chloride(in) = chloride(out)</text>
        <dbReference type="Rhea" id="RHEA:29823"/>
        <dbReference type="ChEBI" id="CHEBI:17996"/>
    </reaction>
</comment>
<comment type="catalytic activity">
    <reaction evidence="1">
        <text>hydrogencarbonate(in) = hydrogencarbonate(out)</text>
        <dbReference type="Rhea" id="RHEA:28695"/>
        <dbReference type="ChEBI" id="CHEBI:17544"/>
    </reaction>
</comment>
<comment type="catalytic activity">
    <reaction evidence="1">
        <text>ATP + H2O = ADP + phosphate + H(+)</text>
        <dbReference type="Rhea" id="RHEA:13065"/>
        <dbReference type="ChEBI" id="CHEBI:15377"/>
        <dbReference type="ChEBI" id="CHEBI:15378"/>
        <dbReference type="ChEBI" id="CHEBI:30616"/>
        <dbReference type="ChEBI" id="CHEBI:43474"/>
        <dbReference type="ChEBI" id="CHEBI:456216"/>
    </reaction>
    <physiologicalReaction direction="left-to-right" evidence="1">
        <dbReference type="Rhea" id="RHEA:13066"/>
    </physiologicalReaction>
</comment>
<comment type="subunit">
    <text evidence="1 2 3">Monomer; does not require oligomerization for channel activity. May form oligomers in the membrane (By similarity). Interacts with SLC26A3, SLC26A6 and NHERF1 (By similarity). Interacts with SHANK2 (By similarity). Interacts with MYO6 (By similarity). Interacts (via C-terminus) with GOPC (via PDZ domain); this promotes CFTR internalization and thereby decreases channel activity. Interacts with SLC4A7 through NHERF1. Found in a complex with MYO5B and RAB11A. Interacts with ANO1. Interacts with SLC26A8 (By similarity). Interacts with AHCYL1; the interaction increases CFTR activity (By similarity). Interacts with CSE1L (By similarity). The core-glycosylated form interacts with GORASP2 (via PDZ GRASP-type 1 domain) in respone to ER stress (By similarity). Interacts with MARCHF2; the interaction leads to CFTR ubiqtuitination and degradation (By similarity). Interacts with ADGRG2 (By similarity).</text>
</comment>
<comment type="subcellular location">
    <subcellularLocation>
        <location evidence="2">Apical cell membrane</location>
        <topology evidence="1">Multi-pass membrane protein</topology>
    </subcellularLocation>
    <subcellularLocation>
        <location evidence="1">Early endosome membrane</location>
        <topology evidence="1">Multi-pass membrane protein</topology>
    </subcellularLocation>
    <subcellularLocation>
        <location evidence="2">Cell membrane</location>
        <topology evidence="1">Multi-pass membrane protein</topology>
    </subcellularLocation>
    <subcellularLocation>
        <location evidence="1">Recycling endosome membrane</location>
        <topology evidence="1">Multi-pass membrane protein</topology>
    </subcellularLocation>
    <subcellularLocation>
        <location evidence="1">Endoplasmic reticulum membrane</location>
        <topology evidence="1">Multi-pass membrane protein</topology>
    </subcellularLocation>
    <subcellularLocation>
        <location evidence="3">Nucleus</location>
    </subcellularLocation>
    <text evidence="1 3">The channel is internalized from the cell surface into an endosomal recycling compartment, from where it is recycled to the cell membrane. In the oviduct and bronchus, detected on the apical side of epithelial cells, but not associated with cilia. In Sertoli cells, a processed product is detected in the nucleus. ER stress induces GORASP2-mediated unconventional (ER/Golgi-independent) trafficking of core-glycosylated CFTR to cell membrane.</text>
</comment>
<comment type="domain">
    <text evidence="1 2">Binds and hydrolyzes ATP via the two cytoplasmic ABC transporter nucleotide-binding domains. The two ATP-binding domains interact with each other, forming a head-to-tail dimer. Normal ATPase activity requires interaction between the two domains. The first ABC transporter nucleotide-binding domain has no ATPase activity by itself.</text>
</comment>
<comment type="domain">
    <text evidence="1">The PDZ-binding motif mediates interactions with GOPC and with the SLC4A7, NHERF1/EBP50 complex.</text>
</comment>
<comment type="domain">
    <text evidence="1">The disordered R region mediates channel activation when it is phosphorylated, but not in the absence of phosphorylation.</text>
</comment>
<comment type="PTM">
    <text evidence="1">N-glycosylated.</text>
</comment>
<comment type="PTM">
    <text evidence="1">Phosphorylated; cAMP treatment promotes phosphorylation and activates the channel. Dephosphorylation decreases the ATPase activity (in vitro). Phosphorylation at PKA sites activates the channel. Phosphorylation at PKC sites enhances the response to phosphorylation by PKA. Phosphorylated by AMPK; this inhibits channel activity.</text>
</comment>
<comment type="PTM">
    <text evidence="1">Ubiquitinated, leading to its degradation in the lysosome. Deubiquitination by USP10 in early endosomes enhances its endocytic recycling to the cell membrane. Ubiquitinated by RNF185 during ER stress. Ubiquitinated by MARCHF2 (By similarity).</text>
</comment>
<comment type="similarity">
    <text evidence="8">Belongs to the ABC transporter superfamily. ABCC family. CFTR transporter (TC 3.A.1.202) subfamily.</text>
</comment>
<protein>
    <recommendedName>
        <fullName evidence="1">Cystic fibrosis transmembrane conductance regulator</fullName>
        <shortName>CFTR</shortName>
    </recommendedName>
    <alternativeName>
        <fullName>ATP-binding cassette sub-family C member 7</fullName>
    </alternativeName>
    <alternativeName>
        <fullName>Channel conductance-controlling ATPase</fullName>
        <ecNumber evidence="1">5.6.1.6</ecNumber>
    </alternativeName>
    <alternativeName>
        <fullName>cAMP-dependent chloride channel</fullName>
    </alternativeName>
</protein>
<feature type="chain" id="PRO_0000229032" description="Cystic fibrosis transmembrane conductance regulator">
    <location>
        <begin position="1"/>
        <end position="1480"/>
    </location>
</feature>
<feature type="topological domain" description="Cytoplasmic" evidence="1">
    <location>
        <begin position="1"/>
        <end position="77"/>
    </location>
</feature>
<feature type="transmembrane region" description="Helical; Name=1" evidence="1">
    <location>
        <begin position="78"/>
        <end position="98"/>
    </location>
</feature>
<feature type="topological domain" description="Extracellular" evidence="1">
    <location>
        <begin position="99"/>
        <end position="122"/>
    </location>
</feature>
<feature type="transmembrane region" description="Helical; Name=2" evidence="1">
    <location>
        <begin position="123"/>
        <end position="146"/>
    </location>
</feature>
<feature type="topological domain" description="Cytoplasmic" evidence="1">
    <location>
        <begin position="147"/>
        <end position="195"/>
    </location>
</feature>
<feature type="transmembrane region" description="Helical; Name=3" evidence="1">
    <location>
        <begin position="196"/>
        <end position="216"/>
    </location>
</feature>
<feature type="topological domain" description="Extracellular" evidence="1">
    <location>
        <begin position="217"/>
        <end position="222"/>
    </location>
</feature>
<feature type="transmembrane region" description="Helical; Name=4" evidence="1">
    <location>
        <begin position="223"/>
        <end position="243"/>
    </location>
</feature>
<feature type="topological domain" description="Cytoplasmic" evidence="1">
    <location>
        <begin position="244"/>
        <end position="298"/>
    </location>
</feature>
<feature type="transmembrane region" description="Helical; Name=5" evidence="1">
    <location>
        <begin position="299"/>
        <end position="319"/>
    </location>
</feature>
<feature type="topological domain" description="Extracellular" evidence="1">
    <location>
        <begin position="320"/>
        <end position="339"/>
    </location>
</feature>
<feature type="transmembrane region" description="Helical; Name=6" evidence="1">
    <location>
        <begin position="340"/>
        <end position="358"/>
    </location>
</feature>
<feature type="topological domain" description="Cytoplasmic" evidence="1">
    <location>
        <begin position="359"/>
        <end position="858"/>
    </location>
</feature>
<feature type="transmembrane region" description="Helical; Name=7" evidence="1">
    <location>
        <begin position="859"/>
        <end position="879"/>
    </location>
</feature>
<feature type="topological domain" description="Extracellular" evidence="1">
    <location>
        <begin position="880"/>
        <end position="918"/>
    </location>
</feature>
<feature type="transmembrane region" description="Discontinuously helical; Name=8" evidence="1">
    <location>
        <begin position="919"/>
        <end position="939"/>
    </location>
</feature>
<feature type="topological domain" description="Cytoplasmic" evidence="1">
    <location>
        <begin position="940"/>
        <end position="990"/>
    </location>
</feature>
<feature type="transmembrane region" description="Helical; Name=9" evidence="1">
    <location>
        <begin position="991"/>
        <end position="1011"/>
    </location>
</feature>
<feature type="topological domain" description="Extracellular" evidence="1">
    <location>
        <begin position="1012"/>
        <end position="1013"/>
    </location>
</feature>
<feature type="transmembrane region" description="Helical; Name=10" evidence="1">
    <location>
        <begin position="1014"/>
        <end position="1034"/>
    </location>
</feature>
<feature type="topological domain" description="Cytoplasmic" evidence="1">
    <location>
        <begin position="1035"/>
        <end position="1095"/>
    </location>
</feature>
<feature type="transmembrane region" description="Helical; Name=11" evidence="1">
    <location>
        <begin position="1096"/>
        <end position="1116"/>
    </location>
</feature>
<feature type="topological domain" description="Extracellular" evidence="1">
    <location>
        <begin position="1117"/>
        <end position="1130"/>
    </location>
</feature>
<feature type="transmembrane region" description="Helical; Name=12" evidence="1">
    <location>
        <begin position="1131"/>
        <end position="1151"/>
    </location>
</feature>
<feature type="topological domain" description="Cytoplasmic" evidence="1">
    <location>
        <begin position="1152"/>
        <end position="1480"/>
    </location>
</feature>
<feature type="domain" description="ABC transmembrane type-1 1" evidence="6">
    <location>
        <begin position="81"/>
        <end position="365"/>
    </location>
</feature>
<feature type="domain" description="ABC transporter 1" evidence="5">
    <location>
        <begin position="423"/>
        <end position="646"/>
    </location>
</feature>
<feature type="domain" description="ABC transmembrane type-1 2" evidence="6">
    <location>
        <begin position="859"/>
        <end position="1155"/>
    </location>
</feature>
<feature type="domain" description="ABC transporter 2" evidence="5">
    <location>
        <begin position="1210"/>
        <end position="1443"/>
    </location>
</feature>
<feature type="region of interest" description="Disordered R region" evidence="1">
    <location>
        <begin position="654"/>
        <end position="831"/>
    </location>
</feature>
<feature type="region of interest" description="Interaction with GORASP2" evidence="1">
    <location>
        <begin position="1386"/>
        <end position="1480"/>
    </location>
</feature>
<feature type="region of interest" description="Disordered" evidence="7">
    <location>
        <begin position="1452"/>
        <end position="1480"/>
    </location>
</feature>
<feature type="short sequence motif" description="PDZ-binding" evidence="1">
    <location>
        <begin position="1478"/>
        <end position="1480"/>
    </location>
</feature>
<feature type="compositionally biased region" description="Acidic residues" evidence="7">
    <location>
        <begin position="1470"/>
        <end position="1480"/>
    </location>
</feature>
<feature type="binding site" evidence="1">
    <location>
        <position position="401"/>
    </location>
    <ligand>
        <name>ATP</name>
        <dbReference type="ChEBI" id="CHEBI:30616"/>
        <label>1</label>
    </ligand>
</feature>
<feature type="binding site" evidence="1">
    <location>
        <position position="434"/>
    </location>
    <ligand>
        <name>ATP</name>
        <dbReference type="ChEBI" id="CHEBI:30616"/>
        <label>1</label>
    </ligand>
</feature>
<feature type="binding site" evidence="5">
    <location>
        <begin position="458"/>
        <end position="465"/>
    </location>
    <ligand>
        <name>ATP</name>
        <dbReference type="ChEBI" id="CHEBI:30616"/>
        <label>1</label>
    </ligand>
</feature>
<feature type="binding site" evidence="2">
    <location>
        <position position="493"/>
    </location>
    <ligand>
        <name>ATP</name>
        <dbReference type="ChEBI" id="CHEBI:30616"/>
        <label>1</label>
    </ligand>
</feature>
<feature type="binding site" evidence="1">
    <location>
        <position position="1219"/>
    </location>
    <ligand>
        <name>ATP</name>
        <dbReference type="ChEBI" id="CHEBI:30616"/>
        <label>2</label>
    </ligand>
</feature>
<feature type="binding site" evidence="5">
    <location>
        <begin position="1244"/>
        <end position="1251"/>
    </location>
    <ligand>
        <name>ATP</name>
        <dbReference type="ChEBI" id="CHEBI:30616"/>
        <label>2</label>
    </ligand>
</feature>
<feature type="modified residue" description="Phosphoserine" evidence="1">
    <location>
        <position position="549"/>
    </location>
</feature>
<feature type="modified residue" description="Phosphoserine" evidence="1">
    <location>
        <position position="660"/>
    </location>
</feature>
<feature type="modified residue" description="Phosphoserine; by PKA" evidence="1">
    <location>
        <position position="670"/>
    </location>
</feature>
<feature type="modified residue" description="Phosphoserine" evidence="1">
    <location>
        <position position="700"/>
    </location>
</feature>
<feature type="modified residue" description="Phosphoserine" evidence="1">
    <location>
        <position position="712"/>
    </location>
</feature>
<feature type="modified residue" description="Phosphothreonine" evidence="1">
    <location>
        <position position="717"/>
    </location>
</feature>
<feature type="modified residue" description="Phosphoserine" evidence="1">
    <location>
        <position position="737"/>
    </location>
</feature>
<feature type="modified residue" description="Phosphoserine" evidence="1">
    <location>
        <position position="753"/>
    </location>
</feature>
<feature type="modified residue" description="Phosphoserine" evidence="1">
    <location>
        <position position="768"/>
    </location>
</feature>
<feature type="modified residue" description="Phosphoserine" evidence="1">
    <location>
        <position position="790"/>
    </location>
</feature>
<feature type="modified residue" description="Phosphoserine" evidence="1">
    <location>
        <position position="795"/>
    </location>
</feature>
<feature type="modified residue" description="Phosphoserine" evidence="1">
    <location>
        <position position="813"/>
    </location>
</feature>
<feature type="modified residue" description="Phosphoserine" evidence="1">
    <location>
        <position position="1444"/>
    </location>
</feature>
<feature type="modified residue" description="Phosphoserine" evidence="1">
    <location>
        <position position="1456"/>
    </location>
</feature>
<feature type="lipid moiety-binding region" description="S-palmitoyl cysteine" evidence="1">
    <location>
        <position position="524"/>
    </location>
</feature>
<feature type="lipid moiety-binding region" description="S-palmitoyl cysteine" evidence="1">
    <location>
        <position position="1395"/>
    </location>
</feature>
<feature type="glycosylation site" description="N-linked (GlcNAc...) asparagine" evidence="4">
    <location>
        <position position="894"/>
    </location>
</feature>
<feature type="glycosylation site" description="N-linked (GlcNAc...) asparagine" evidence="4">
    <location>
        <position position="900"/>
    </location>
</feature>
<feature type="cross-link" description="Glycyl lysine isopeptide (Lys-Gly) (interchain with G-Cter in ubiquitin)" evidence="1">
    <location>
        <position position="688"/>
    </location>
</feature>
<organism>
    <name type="scientific">Pongo abelii</name>
    <name type="common">Sumatran orangutan</name>
    <name type="synonym">Pongo pygmaeus abelii</name>
    <dbReference type="NCBI Taxonomy" id="9601"/>
    <lineage>
        <taxon>Eukaryota</taxon>
        <taxon>Metazoa</taxon>
        <taxon>Chordata</taxon>
        <taxon>Craniata</taxon>
        <taxon>Vertebrata</taxon>
        <taxon>Euteleostomi</taxon>
        <taxon>Mammalia</taxon>
        <taxon>Eutheria</taxon>
        <taxon>Euarchontoglires</taxon>
        <taxon>Primates</taxon>
        <taxon>Haplorrhini</taxon>
        <taxon>Catarrhini</taxon>
        <taxon>Hominidae</taxon>
        <taxon>Pongo</taxon>
    </lineage>
</organism>
<evidence type="ECO:0000250" key="1">
    <source>
        <dbReference type="UniProtKB" id="P13569"/>
    </source>
</evidence>
<evidence type="ECO:0000250" key="2">
    <source>
        <dbReference type="UniProtKB" id="P26361"/>
    </source>
</evidence>
<evidence type="ECO:0000250" key="3">
    <source>
        <dbReference type="UniProtKB" id="P34158"/>
    </source>
</evidence>
<evidence type="ECO:0000255" key="4"/>
<evidence type="ECO:0000255" key="5">
    <source>
        <dbReference type="PROSITE-ProRule" id="PRU00434"/>
    </source>
</evidence>
<evidence type="ECO:0000255" key="6">
    <source>
        <dbReference type="PROSITE-ProRule" id="PRU00441"/>
    </source>
</evidence>
<evidence type="ECO:0000256" key="7">
    <source>
        <dbReference type="SAM" id="MobiDB-lite"/>
    </source>
</evidence>
<evidence type="ECO:0000305" key="8"/>
<gene>
    <name evidence="1" type="primary">CFTR</name>
    <name type="synonym">ABCC7</name>
</gene>
<accession>Q2IBE4</accession>
<sequence>MQRSPLEKASVVSKLFFSWTRPILKKGYRQRLELSDIYQIPSADSADNLSEKLEREWDRELASKKNPKLINALRRCFFWRFMFYGIFLYLGEVTKAVQPLLLGRIIASYDPDNKEERSIAIYLGIGLCLLFIVRTLLLHPAIFGLHHIGMQMRIAMFSLIYKKTLKLSSRVLDKISIGQLVSLLSNNLNKFDEGLALAHFVWIAPLQVALLMGLIWELLQASAFCGLGFLIVLALFQAGLGRMMMKYRDQRAGKINERLVITSEMIENIQSVKAYCWEEAMEKMIENLRQTELKLTRKAAYVRYFNSSAFFFSGFFVVFLSVLPYALIKGIVLRKIFTTISFCIVLRMAVTRQFPWAVQTWYDSLGAINKIQDFLQKQEYKTLEYNLTTTEVVMENVTAFWEEGFGELFEKAKQNNNNRETSNGDDSLFFSNFSLLGTPVLKDINFKIERGQLLAVAGSTGAGKTSLLMMIMGELEPSEGKIKHSGRISFCSQFSWIMPGTIKENIIFGVSYDEYRYRSVIKACQLEEDISKFAEKDNIVLGEGGITLSGGQRARISLARAVYKDADLYLLDSPFGYLDVLTEKEIFESCVCKLMANKTRILVTSKMEHLKKADKILILHEGSSYFYGTFSELQNLRPDFSSKLMGCDSFDQFSAERRNSILTETLRRFSLEGDAPVSWTETKKQPFKQTGEFGEKRKNSILNPINSIRKFSIVQKTPLQMNGIEEDSDEPFERRVSLVPDSEQGEAILPRISVISTGPMLQARRRQSVLNLMTQSVNQGQNIHRKTTASTRKVSLAPQANLTELDIYSRRLSQETGLEISEEINEEDLKECFFDDMESIPAVTTWNTYLRYITVHKSLIFVLIWCLVIFLAEVAASLVVLWLLGNTPLQDKGNSTHSRNNSYAVIITSTSSYYVFYIYVGVADTLLAMGFFRGLPLVHTLITVSKILHNKMLHSVLQAPMSTLNTLKAGGILNRFSKDIAILDDLLPLTIFDFIQLLLIVIGAIAVVAVLQPYIFVATVPVIVAFIMLRAYFLQTSQQLKQLESEGRSPIFTHLVTSLKGLWTLRAFGRQPYFETLFHKALNLHTANWFLYLSTLRWFQMRIEMIFVIFFIAVTFISILTTGEGEGRVGIILTLAMNIMSTLQWAVNSSIDVDSLMRSVSRVFKFIDMPTEGKPTKSTKPYKNGQLSKLMIIENSHVKKDDIWPSGGQMTVKDLTAKYTEGGNAILENISFSISPGQRVGLLGRTGSGKSTLLSAFLRLLNTEGEIQIDGVSWDSITLQQWRKAFGVIPQKVFIFSGTFRKNLDPYEQWSDQEIWKVADEVGLRSVIEQFPGKLDFVLVDGGCVLSHGHKQLMCLARSVLSKAKILLLDEPSAHLDPVTYQIIRRTLKQAFADCTVILCEHRIEAMLECQQFLVIEENKVRQYDSIQKLLNERSLFQQAISPSDRVKLFPHRNSSKCKSKPQIAALKEETEEEVQDTRL</sequence>